<organism>
    <name type="scientific">Saccharomyces cerevisiae (strain ATCC 204508 / S288c)</name>
    <name type="common">Baker's yeast</name>
    <dbReference type="NCBI Taxonomy" id="559292"/>
    <lineage>
        <taxon>Eukaryota</taxon>
        <taxon>Fungi</taxon>
        <taxon>Dikarya</taxon>
        <taxon>Ascomycota</taxon>
        <taxon>Saccharomycotina</taxon>
        <taxon>Saccharomycetes</taxon>
        <taxon>Saccharomycetales</taxon>
        <taxon>Saccharomycetaceae</taxon>
        <taxon>Saccharomyces</taxon>
    </lineage>
</organism>
<reference key="1">
    <citation type="journal article" date="1994" name="Nature">
        <title>Complete DNA sequence of yeast chromosome XI.</title>
        <authorList>
            <person name="Dujon B."/>
            <person name="Alexandraki D."/>
            <person name="Andre B."/>
            <person name="Ansorge W."/>
            <person name="Baladron V."/>
            <person name="Ballesta J.P.G."/>
            <person name="Banrevi A."/>
            <person name="Bolle P.-A."/>
            <person name="Bolotin-Fukuhara M."/>
            <person name="Bossier P."/>
            <person name="Bou G."/>
            <person name="Boyer J."/>
            <person name="Buitrago M.J."/>
            <person name="Cheret G."/>
            <person name="Colleaux L."/>
            <person name="Daignan-Fornier B."/>
            <person name="del Rey F."/>
            <person name="Dion C."/>
            <person name="Domdey H."/>
            <person name="Duesterhoeft A."/>
            <person name="Duesterhus S."/>
            <person name="Entian K.-D."/>
            <person name="Erfle H."/>
            <person name="Esteban P.F."/>
            <person name="Feldmann H."/>
            <person name="Fernandes L."/>
            <person name="Fobo G.M."/>
            <person name="Fritz C."/>
            <person name="Fukuhara H."/>
            <person name="Gabel C."/>
            <person name="Gaillon L."/>
            <person name="Garcia-Cantalejo J.M."/>
            <person name="Garcia-Ramirez J.J."/>
            <person name="Gent M.E."/>
            <person name="Ghazvini M."/>
            <person name="Goffeau A."/>
            <person name="Gonzalez A."/>
            <person name="Grothues D."/>
            <person name="Guerreiro P."/>
            <person name="Hegemann J.H."/>
            <person name="Hewitt N."/>
            <person name="Hilger F."/>
            <person name="Hollenberg C.P."/>
            <person name="Horaitis O."/>
            <person name="Indge K.J."/>
            <person name="Jacquier A."/>
            <person name="James C.M."/>
            <person name="Jauniaux J.-C."/>
            <person name="Jimenez A."/>
            <person name="Keuchel H."/>
            <person name="Kirchrath L."/>
            <person name="Kleine K."/>
            <person name="Koetter P."/>
            <person name="Legrain P."/>
            <person name="Liebl S."/>
            <person name="Louis E.J."/>
            <person name="Maia e Silva A."/>
            <person name="Marck C."/>
            <person name="Monnier A.-L."/>
            <person name="Moestl D."/>
            <person name="Mueller S."/>
            <person name="Obermaier B."/>
            <person name="Oliver S.G."/>
            <person name="Pallier C."/>
            <person name="Pascolo S."/>
            <person name="Pfeiffer F."/>
            <person name="Philippsen P."/>
            <person name="Planta R.J."/>
            <person name="Pohl F.M."/>
            <person name="Pohl T.M."/>
            <person name="Poehlmann R."/>
            <person name="Portetelle D."/>
            <person name="Purnelle B."/>
            <person name="Puzos V."/>
            <person name="Ramezani Rad M."/>
            <person name="Rasmussen S.W."/>
            <person name="Remacha M.A."/>
            <person name="Revuelta J.L."/>
            <person name="Richard G.-F."/>
            <person name="Rieger M."/>
            <person name="Rodrigues-Pousada C."/>
            <person name="Rose M."/>
            <person name="Rupp T."/>
            <person name="Santos M.A."/>
            <person name="Schwager C."/>
            <person name="Sensen C."/>
            <person name="Skala J."/>
            <person name="Soares H."/>
            <person name="Sor F."/>
            <person name="Stegemann J."/>
            <person name="Tettelin H."/>
            <person name="Thierry A."/>
            <person name="Tzermia M."/>
            <person name="Urrestarazu L.A."/>
            <person name="van Dyck L."/>
            <person name="van Vliet-Reedijk J.C."/>
            <person name="Valens M."/>
            <person name="Vandenbol M."/>
            <person name="Vilela C."/>
            <person name="Vissers S."/>
            <person name="von Wettstein D."/>
            <person name="Voss H."/>
            <person name="Wiemann S."/>
            <person name="Xu G."/>
            <person name="Zimmermann J."/>
            <person name="Haasemann M."/>
            <person name="Becker I."/>
            <person name="Mewes H.-W."/>
        </authorList>
    </citation>
    <scope>NUCLEOTIDE SEQUENCE [LARGE SCALE GENOMIC DNA]</scope>
    <source>
        <strain>ATCC 204508 / S288c</strain>
    </source>
</reference>
<reference key="2">
    <citation type="journal article" date="2014" name="G3 (Bethesda)">
        <title>The reference genome sequence of Saccharomyces cerevisiae: Then and now.</title>
        <authorList>
            <person name="Engel S.R."/>
            <person name="Dietrich F.S."/>
            <person name="Fisk D.G."/>
            <person name="Binkley G."/>
            <person name="Balakrishnan R."/>
            <person name="Costanzo M.C."/>
            <person name="Dwight S.S."/>
            <person name="Hitz B.C."/>
            <person name="Karra K."/>
            <person name="Nash R.S."/>
            <person name="Weng S."/>
            <person name="Wong E.D."/>
            <person name="Lloyd P."/>
            <person name="Skrzypek M.S."/>
            <person name="Miyasato S.R."/>
            <person name="Simison M."/>
            <person name="Cherry J.M."/>
        </authorList>
    </citation>
    <scope>GENOME REANNOTATION</scope>
    <source>
        <strain>ATCC 204508 / S288c</strain>
    </source>
</reference>
<reference key="3">
    <citation type="journal article" date="2003" name="Nature">
        <title>Global analysis of protein localization in budding yeast.</title>
        <authorList>
            <person name="Huh W.-K."/>
            <person name="Falvo J.V."/>
            <person name="Gerke L.C."/>
            <person name="Carroll A.S."/>
            <person name="Howson R.W."/>
            <person name="Weissman J.S."/>
            <person name="O'Shea E.K."/>
        </authorList>
    </citation>
    <scope>SUBCELLULAR LOCATION [LARGE SCALE ANALYSIS]</scope>
</reference>
<reference key="4">
    <citation type="journal article" date="2003" name="Nature">
        <title>Global analysis of protein expression in yeast.</title>
        <authorList>
            <person name="Ghaemmaghami S."/>
            <person name="Huh W.-K."/>
            <person name="Bower K."/>
            <person name="Howson R.W."/>
            <person name="Belle A."/>
            <person name="Dephoure N."/>
            <person name="O'Shea E.K."/>
            <person name="Weissman J.S."/>
        </authorList>
    </citation>
    <scope>LEVEL OF PROTEIN EXPRESSION [LARGE SCALE ANALYSIS]</scope>
</reference>
<reference key="5">
    <citation type="journal article" date="2010" name="J. Biol. Chem.">
        <title>Structure and activity of the metal-independent fructose-1,6-bisphosphatase YK23 from Saccharomyces cerevisiae.</title>
        <authorList>
            <person name="Kuznetsova E."/>
            <person name="Xu L."/>
            <person name="Singer A."/>
            <person name="Brown G."/>
            <person name="Dong A."/>
            <person name="Flick R."/>
            <person name="Cui H."/>
            <person name="Cuff M."/>
            <person name="Joachimiak A."/>
            <person name="Savchenko A."/>
            <person name="Yakunin A.F."/>
        </authorList>
    </citation>
    <scope>X-RAY CRYSTALLOGRAPHY (1.75 ANGSTROMS) IN COMPLEX WITH FBP</scope>
    <scope>SUBUNIT</scope>
    <scope>CATALYTIC ACTIVITY</scope>
    <scope>BIOPHYSICOCHEMICAL PROPERTIES</scope>
    <scope>MUTAGENESIS OF ARG-12; HIS-13; THR-16; SER-19; TYR-24; SER-65; ARG-69; GLU-99; TYR-102; TRP-131; HIS-176; HIS-178 AND ARG-181</scope>
    <scope>ACTIVE SITE</scope>
</reference>
<reference key="6">
    <citation type="journal article" date="2011" name="Cell">
        <title>Riboneogenesis in yeast.</title>
        <authorList>
            <person name="Clasquin M.F."/>
            <person name="Melamud E."/>
            <person name="Singer A."/>
            <person name="Gooding J.R."/>
            <person name="Xu X."/>
            <person name="Dong A."/>
            <person name="Cui H."/>
            <person name="Campagna S.R."/>
            <person name="Savchenko A."/>
            <person name="Yakunin A.F."/>
            <person name="Rabinowitz J.D."/>
            <person name="Caudy A.A."/>
        </authorList>
    </citation>
    <scope>X-RAY CRYSTALLOGRAPHY (2.40 ANGSTROMS) IN COMPLEX WITH SBP</scope>
    <scope>SUBUNIT</scope>
    <scope>FUNCTION</scope>
    <scope>CATALYTIC ACTIVITY</scope>
    <scope>BIOPHYSICOCHEMICAL PROPERTIES</scope>
    <scope>INDUCTION</scope>
</reference>
<feature type="chain" id="PRO_0000203211" description="Sedoheptulose 1,7-bisphosphatase">
    <location>
        <begin position="1"/>
        <end position="271"/>
    </location>
</feature>
<feature type="active site" description="Tele-phosphohistidine intermediate" evidence="3">
    <location>
        <position position="13"/>
    </location>
</feature>
<feature type="active site" description="Proton donor/acceptor" evidence="6">
    <location>
        <position position="99"/>
    </location>
</feature>
<feature type="binding site" evidence="3">
    <location>
        <position position="12"/>
    </location>
    <ligand>
        <name>substrate</name>
    </ligand>
</feature>
<feature type="binding site" evidence="3">
    <location>
        <begin position="24"/>
        <end position="25"/>
    </location>
    <ligand>
        <name>substrate</name>
    </ligand>
</feature>
<feature type="binding site" evidence="3">
    <location>
        <position position="69"/>
    </location>
    <ligand>
        <name>substrate</name>
    </ligand>
</feature>
<feature type="binding site" evidence="3">
    <location>
        <begin position="99"/>
        <end position="102"/>
    </location>
    <ligand>
        <name>substrate</name>
    </ligand>
</feature>
<feature type="binding site" evidence="3">
    <location>
        <position position="181"/>
    </location>
    <ligand>
        <name>substrate</name>
    </ligand>
</feature>
<feature type="binding site" evidence="3">
    <location>
        <position position="244"/>
    </location>
    <ligand>
        <name>substrate</name>
    </ligand>
</feature>
<feature type="site" description="Transition state stabilizer" evidence="6">
    <location>
        <position position="176"/>
    </location>
</feature>
<feature type="mutagenesis site" description="Impairs catalytic activity." evidence="3">
    <original>R</original>
    <variation>A</variation>
    <location>
        <position position="12"/>
    </location>
</feature>
<feature type="mutagenesis site" description="Impairs catalytic activity." evidence="3">
    <original>H</original>
    <variation>A</variation>
    <location>
        <position position="13"/>
    </location>
</feature>
<feature type="mutagenesis site" description="Impairs catalytic activity." evidence="3">
    <original>T</original>
    <variation>A</variation>
    <location>
        <position position="16"/>
    </location>
</feature>
<feature type="mutagenesis site" description="Leads to reduced substrate affinity." evidence="3">
    <original>S</original>
    <variation>A</variation>
    <location>
        <position position="19"/>
    </location>
</feature>
<feature type="mutagenesis site" description="Leads to low activity and reduced substrate affinity." evidence="3">
    <original>Y</original>
    <variation>A</variation>
    <location>
        <position position="24"/>
    </location>
</feature>
<feature type="mutagenesis site" description="Leads to low activity and reduced substrate affinity." evidence="3">
    <original>S</original>
    <variation>A</variation>
    <location>
        <position position="65"/>
    </location>
</feature>
<feature type="mutagenesis site" description="Leads to reduced substrate affinity." evidence="3">
    <original>R</original>
    <variation>A</variation>
    <location>
        <position position="69"/>
    </location>
</feature>
<feature type="mutagenesis site" description="Impairs catalytic activity." evidence="3">
    <original>E</original>
    <variation>A</variation>
    <location>
        <position position="99"/>
    </location>
</feature>
<feature type="mutagenesis site" description="Impairs catalytic activity." evidence="3">
    <original>Y</original>
    <variation>A</variation>
    <location>
        <position position="102"/>
    </location>
</feature>
<feature type="mutagenesis site" description="Leads to reduced substrate affinity." evidence="3">
    <original>W</original>
    <variation>A</variation>
    <location>
        <position position="131"/>
    </location>
</feature>
<feature type="mutagenesis site" description="Impairs catalytic activity." evidence="3">
    <original>H</original>
    <variation>A</variation>
    <location>
        <position position="176"/>
    </location>
</feature>
<feature type="mutagenesis site" description="Leads to low activity and reduced substrate affinity." evidence="3">
    <original>H</original>
    <variation>A</variation>
    <location>
        <position position="178"/>
    </location>
</feature>
<feature type="mutagenesis site" description="Leads to reduced substrate affinity." evidence="3">
    <original>R</original>
    <variation>A</variation>
    <location>
        <position position="181"/>
    </location>
</feature>
<feature type="strand" evidence="7">
    <location>
        <begin position="7"/>
        <end position="12"/>
    </location>
</feature>
<feature type="helix" evidence="7">
    <location>
        <begin position="17"/>
        <end position="21"/>
    </location>
</feature>
<feature type="strand" evidence="9">
    <location>
        <begin position="26"/>
        <end position="28"/>
    </location>
</feature>
<feature type="helix" evidence="7">
    <location>
        <begin position="34"/>
        <end position="48"/>
    </location>
</feature>
<feature type="helix" evidence="8">
    <location>
        <begin position="49"/>
        <end position="51"/>
    </location>
</feature>
<feature type="helix" evidence="7">
    <location>
        <begin position="56"/>
        <end position="58"/>
    </location>
</feature>
<feature type="strand" evidence="7">
    <location>
        <begin position="59"/>
        <end position="64"/>
    </location>
</feature>
<feature type="helix" evidence="7">
    <location>
        <begin position="68"/>
        <end position="77"/>
    </location>
</feature>
<feature type="turn" evidence="7">
    <location>
        <begin position="78"/>
        <end position="80"/>
    </location>
</feature>
<feature type="helix" evidence="7">
    <location>
        <begin position="83"/>
        <end position="87"/>
    </location>
</feature>
<feature type="strand" evidence="7">
    <location>
        <begin position="89"/>
        <end position="93"/>
    </location>
</feature>
<feature type="helix" evidence="7">
    <location>
        <begin position="95"/>
        <end position="97"/>
    </location>
</feature>
<feature type="helix" evidence="7">
    <location>
        <begin position="103"/>
        <end position="105"/>
    </location>
</feature>
<feature type="helix" evidence="7">
    <location>
        <begin position="110"/>
        <end position="119"/>
    </location>
</feature>
<feature type="strand" evidence="7">
    <location>
        <begin position="124"/>
        <end position="126"/>
    </location>
</feature>
<feature type="helix" evidence="7">
    <location>
        <begin position="130"/>
        <end position="133"/>
    </location>
</feature>
<feature type="helix" evidence="7">
    <location>
        <begin position="141"/>
        <end position="164"/>
    </location>
</feature>
<feature type="strand" evidence="7">
    <location>
        <begin position="170"/>
        <end position="175"/>
    </location>
</feature>
<feature type="helix" evidence="7">
    <location>
        <begin position="177"/>
        <end position="187"/>
    </location>
</feature>
<feature type="strand" evidence="7">
    <location>
        <begin position="191"/>
        <end position="195"/>
    </location>
</feature>
<feature type="helix" evidence="7">
    <location>
        <begin position="199"/>
        <end position="202"/>
    </location>
</feature>
<feature type="strand" evidence="7">
    <location>
        <begin position="219"/>
        <end position="223"/>
    </location>
</feature>
<feature type="strand" evidence="7">
    <location>
        <begin position="237"/>
        <end position="243"/>
    </location>
</feature>
<feature type="strand" evidence="7">
    <location>
        <begin position="249"/>
        <end position="253"/>
    </location>
</feature>
<feature type="turn" evidence="7">
    <location>
        <begin position="254"/>
        <end position="257"/>
    </location>
</feature>
<feature type="helix" evidence="8">
    <location>
        <begin position="262"/>
        <end position="264"/>
    </location>
</feature>
<sequence>MPSLTPRCIIVRHGQTEWSKSGQYTGLTDLPLTPYGEGQMLRTGESVFRNNQFLNPDNITYIFTSPRLRARQTVDLVLKPLSDEQRAKIRVVVDDDLREWEYGDYEGMLTREIIELRKSRGLDKERPWNIWRDGCENGETTQQIGLRLSRAIARIQNLHRKHQSEGRASDIMVFAHGHALRYFAAIWFGLGVQKKCETIEEIQNVKSYDDDTVPYVKLESYRHLVDNPCFLLDAGGIGVLSYAHHNIDEPALELAGPFVSPPEEESQHGDV</sequence>
<keyword id="KW-0002">3D-structure</keyword>
<keyword id="KW-0119">Carbohydrate metabolism</keyword>
<keyword id="KW-0963">Cytoplasm</keyword>
<keyword id="KW-0378">Hydrolase</keyword>
<keyword id="KW-0539">Nucleus</keyword>
<keyword id="KW-0560">Oxidoreductase</keyword>
<keyword id="KW-1185">Reference proteome</keyword>
<name>SHB17_YEAST</name>
<gene>
    <name type="primary">SHB17</name>
    <name type="ordered locus">YKR043C</name>
</gene>
<protein>
    <recommendedName>
        <fullName>Sedoheptulose 1,7-bisphosphatase</fullName>
        <ecNumber>3.1.3.37</ecNumber>
    </recommendedName>
</protein>
<dbReference type="EC" id="3.1.3.37"/>
<dbReference type="EMBL" id="Z28268">
    <property type="protein sequence ID" value="CAA82119.1"/>
    <property type="molecule type" value="Genomic_DNA"/>
</dbReference>
<dbReference type="EMBL" id="BK006944">
    <property type="protein sequence ID" value="DAA09195.1"/>
    <property type="molecule type" value="Genomic_DNA"/>
</dbReference>
<dbReference type="PIR" id="S38115">
    <property type="entry name" value="S38115"/>
</dbReference>
<dbReference type="RefSeq" id="NP_012969.1">
    <property type="nucleotide sequence ID" value="NM_001179833.1"/>
</dbReference>
<dbReference type="PDB" id="3F3K">
    <property type="method" value="X-ray"/>
    <property type="resolution" value="1.75 A"/>
    <property type="chains" value="A/B=2-263"/>
</dbReference>
<dbReference type="PDB" id="3LG2">
    <property type="method" value="X-ray"/>
    <property type="resolution" value="2.60 A"/>
    <property type="chains" value="A/B/C/D=1-271"/>
</dbReference>
<dbReference type="PDB" id="3LL4">
    <property type="method" value="X-ray"/>
    <property type="resolution" value="2.49 A"/>
    <property type="chains" value="A/B=1-271"/>
</dbReference>
<dbReference type="PDB" id="3OI7">
    <property type="method" value="X-ray"/>
    <property type="resolution" value="2.40 A"/>
    <property type="chains" value="A/B/C/D=1-271"/>
</dbReference>
<dbReference type="PDBsum" id="3F3K"/>
<dbReference type="PDBsum" id="3LG2"/>
<dbReference type="PDBsum" id="3LL4"/>
<dbReference type="PDBsum" id="3OI7"/>
<dbReference type="SMR" id="P36136"/>
<dbReference type="BioGRID" id="34175">
    <property type="interactions" value="106"/>
</dbReference>
<dbReference type="DIP" id="DIP-4847N"/>
<dbReference type="FunCoup" id="P36136">
    <property type="interactions" value="49"/>
</dbReference>
<dbReference type="IntAct" id="P36136">
    <property type="interactions" value="2"/>
</dbReference>
<dbReference type="MINT" id="P36136"/>
<dbReference type="STRING" id="4932.YKR043C"/>
<dbReference type="iPTMnet" id="P36136"/>
<dbReference type="PaxDb" id="4932-YKR043C"/>
<dbReference type="PeptideAtlas" id="P36136"/>
<dbReference type="DNASU" id="853917"/>
<dbReference type="EnsemblFungi" id="YKR043C_mRNA">
    <property type="protein sequence ID" value="YKR043C"/>
    <property type="gene ID" value="YKR043C"/>
</dbReference>
<dbReference type="GeneID" id="853917"/>
<dbReference type="KEGG" id="sce:YKR043C"/>
<dbReference type="AGR" id="SGD:S000001751"/>
<dbReference type="SGD" id="S000001751">
    <property type="gene designation" value="SHB17"/>
</dbReference>
<dbReference type="VEuPathDB" id="FungiDB:YKR043C"/>
<dbReference type="eggNOG" id="KOG0235">
    <property type="taxonomic scope" value="Eukaryota"/>
</dbReference>
<dbReference type="HOGENOM" id="CLU_033323_13_0_1"/>
<dbReference type="InParanoid" id="P36136"/>
<dbReference type="OMA" id="GWLIWRD"/>
<dbReference type="OrthoDB" id="4818801at2759"/>
<dbReference type="BioCyc" id="YEAST:G3O-32014-MONOMER"/>
<dbReference type="BRENDA" id="3.1.3.11">
    <property type="organism ID" value="984"/>
</dbReference>
<dbReference type="BioGRID-ORCS" id="853917">
    <property type="hits" value="1 hit in 10 CRISPR screens"/>
</dbReference>
<dbReference type="EvolutionaryTrace" id="P36136"/>
<dbReference type="PRO" id="PR:P36136"/>
<dbReference type="Proteomes" id="UP000002311">
    <property type="component" value="Chromosome XI"/>
</dbReference>
<dbReference type="RNAct" id="P36136">
    <property type="molecule type" value="protein"/>
</dbReference>
<dbReference type="GO" id="GO:0005737">
    <property type="term" value="C:cytoplasm"/>
    <property type="evidence" value="ECO:0007005"/>
    <property type="project" value="SGD"/>
</dbReference>
<dbReference type="GO" id="GO:0005634">
    <property type="term" value="C:nucleus"/>
    <property type="evidence" value="ECO:0007005"/>
    <property type="project" value="SGD"/>
</dbReference>
<dbReference type="GO" id="GO:0016491">
    <property type="term" value="F:oxidoreductase activity"/>
    <property type="evidence" value="ECO:0007669"/>
    <property type="project" value="UniProtKB-KW"/>
</dbReference>
<dbReference type="GO" id="GO:0050278">
    <property type="term" value="F:sedoheptulose-bisphosphatase activity"/>
    <property type="evidence" value="ECO:0000314"/>
    <property type="project" value="SGD"/>
</dbReference>
<dbReference type="GO" id="GO:0046390">
    <property type="term" value="P:ribose phosphate biosynthetic process"/>
    <property type="evidence" value="ECO:0000314"/>
    <property type="project" value="SGD"/>
</dbReference>
<dbReference type="CDD" id="cd07067">
    <property type="entry name" value="HP_PGM_like"/>
    <property type="match status" value="1"/>
</dbReference>
<dbReference type="FunFam" id="3.40.50.1240:FF:000037">
    <property type="entry name" value="Sedoheptulose 1,7-bisphosphatase"/>
    <property type="match status" value="1"/>
</dbReference>
<dbReference type="Gene3D" id="3.40.50.1240">
    <property type="entry name" value="Phosphoglycerate mutase-like"/>
    <property type="match status" value="1"/>
</dbReference>
<dbReference type="InterPro" id="IPR013078">
    <property type="entry name" value="His_Pase_superF_clade-1"/>
</dbReference>
<dbReference type="InterPro" id="IPR029033">
    <property type="entry name" value="His_PPase_superfam"/>
</dbReference>
<dbReference type="InterPro" id="IPR050275">
    <property type="entry name" value="PGM_Phosphatase"/>
</dbReference>
<dbReference type="PANTHER" id="PTHR48100">
    <property type="entry name" value="BROAD-SPECIFICITY PHOSPHATASE YOR283W-RELATED"/>
    <property type="match status" value="1"/>
</dbReference>
<dbReference type="PANTHER" id="PTHR48100:SF15">
    <property type="entry name" value="SEDOHEPTULOSE 1,7-BISPHOSPHATASE"/>
    <property type="match status" value="1"/>
</dbReference>
<dbReference type="Pfam" id="PF00300">
    <property type="entry name" value="His_Phos_1"/>
    <property type="match status" value="1"/>
</dbReference>
<dbReference type="SMART" id="SM00855">
    <property type="entry name" value="PGAM"/>
    <property type="match status" value="1"/>
</dbReference>
<dbReference type="SUPFAM" id="SSF53254">
    <property type="entry name" value="Phosphoglycerate mutase-like"/>
    <property type="match status" value="1"/>
</dbReference>
<proteinExistence type="evidence at protein level"/>
<accession>P36136</accession>
<accession>D6VXA5</accession>
<comment type="function">
    <text evidence="4">Sedoheptulose 1,7-bisphosphatase involved in riboneogenesis. Dephosphorylates sedoheptulose 1,7-bisphosphate (SBP), which is converted via the non-oxidative pentose phosphate pathway to ribose-5-phosphate. Has a fructose 1,6-bisphosphatase activity in vitro, but this is probably not biologically relevant, since deletion does not affect fructose 1,6-biphosphate (FBP) levels.</text>
</comment>
<comment type="catalytic activity">
    <reaction evidence="3 4">
        <text>D-sedoheptulose 1,7-bisphosphate + H2O = D-sedoheptulose 7-phosphate + phosphate</text>
        <dbReference type="Rhea" id="RHEA:17461"/>
        <dbReference type="ChEBI" id="CHEBI:15377"/>
        <dbReference type="ChEBI" id="CHEBI:43474"/>
        <dbReference type="ChEBI" id="CHEBI:57483"/>
        <dbReference type="ChEBI" id="CHEBI:58335"/>
        <dbReference type="EC" id="3.1.3.37"/>
    </reaction>
</comment>
<comment type="biophysicochemical properties">
    <kinetics>
        <KM evidence="3 4">34 uM for sedoheptulose 1,7-bisphosphate (SBP)</KM>
        <KM evidence="3 4">0.2 mM for fructose 1,6-bisphosphate (FBP)</KM>
        <KM evidence="3 4">0.7 mM for fructose 1,6-bisphosphate (in the presence of 1 mM fructose 2,6-bisphosphate)</KM>
        <KM evidence="3 4">2.3 mM for fructose 1,6-bisphosphate (in the presence of 2 mM fructose 2,6-bisphosphate)</KM>
        <KM evidence="3 4">1.4 mM for fructose 1-phosphate</KM>
        <KM evidence="3 4">1.6 mM for glyceraldehyde 3-phosphate</KM>
        <KM evidence="3 4">0.3 mM for erythrose 4-phosphate</KM>
        <Vmax evidence="3 4">7.8 umol/min/mg enzyme toward sedoheptulose 1,7-bisphosphate (SBP)</Vmax>
        <Vmax evidence="3 4">8.7 umol/min/mg enzyme toward fructose 1,6-bisphosphate (FBP)</Vmax>
        <Vmax evidence="3 4">7.3 umol/min/mg enzyme toward fructose 1,6-bisphosphate (in the presence of 1 mM fructose 2,6-bisphosphate)</Vmax>
        <Vmax evidence="3 4">8.9 umol/min/mg enzyme toward fructose 1,6-bisphosphate,(in the presence of 1 mM fructose 2,6-bisphosphate)</Vmax>
        <Vmax evidence="3 4">7.3 umol/min/mg enzyme toward fructose 1-phosphate</Vmax>
        <Vmax evidence="3 4">1.0 umol/min/mg enzyme toward glyceraldehyde 3-phosphate</Vmax>
        <Vmax evidence="3 4">0.6 umol/min/mg enzyme toward erythrose 4-phosphate</Vmax>
    </kinetics>
    <phDependence>
        <text evidence="3 4">Optimum pH is 6.5.</text>
    </phDependence>
</comment>
<comment type="subunit">
    <text evidence="3 4">Homodimer.</text>
</comment>
<comment type="subcellular location">
    <subcellularLocation>
        <location evidence="1">Cytoplasm</location>
    </subcellularLocation>
    <subcellularLocation>
        <location evidence="1">Nucleus</location>
    </subcellularLocation>
</comment>
<comment type="induction">
    <text evidence="4">Expression is correlated with levels of ribosomal proteins, thus periodic SHB17 expression coincides with the peak demand for ribose phosphate that occurs during ribosome synthesis.</text>
</comment>
<comment type="miscellaneous">
    <text evidence="2">Present with 11500 molecules/cell in log phase SD medium.</text>
</comment>
<comment type="similarity">
    <text evidence="5">Belongs to the phosphoglycerate mutase family. SHB17 subfamily.</text>
</comment>
<evidence type="ECO:0000269" key="1">
    <source>
    </source>
</evidence>
<evidence type="ECO:0000269" key="2">
    <source>
    </source>
</evidence>
<evidence type="ECO:0000269" key="3">
    <source>
    </source>
</evidence>
<evidence type="ECO:0000269" key="4">
    <source>
    </source>
</evidence>
<evidence type="ECO:0000305" key="5"/>
<evidence type="ECO:0000305" key="6">
    <source>
    </source>
</evidence>
<evidence type="ECO:0007829" key="7">
    <source>
        <dbReference type="PDB" id="3F3K"/>
    </source>
</evidence>
<evidence type="ECO:0007829" key="8">
    <source>
        <dbReference type="PDB" id="3LG2"/>
    </source>
</evidence>
<evidence type="ECO:0007829" key="9">
    <source>
        <dbReference type="PDB" id="3OI7"/>
    </source>
</evidence>